<gene>
    <name type="primary">alr</name>
    <name type="ordered locus">Bphyt_2477</name>
</gene>
<sequence length="356" mass="38175">MPRPLSATIHTSALANNLAVARRYAPKSKIWAVVKANAYGHGLARVFPGLRATDGFGLLDLEEAVKLRELGWAGPILLLEGFFRPTDIDVIDRYSLTTALHSDEQLRMLEMARLSKPVNIQLKMNTGMNRLGYTPEKFRAAWERARAAQGVGQITLMTHFSDADGDRGVDYQVQAFERGAQGIAGARSLANSAATLWHPATHFDWVRPGIIMYGASPSGVTAAIEGTGLQPAMTLASELIAVQTLSEGHTVGYGSSFKARGSMRIGVVACGYADGYPRVAPEGTPVIVDGVRTRVVGRVSMDMLTVDLTPVPTANVGSRVELWGTSLPIDDVAQACGTIGYELMCAVAPRVPVRAE</sequence>
<feature type="chain" id="PRO_1000138583" description="Alanine racemase">
    <location>
        <begin position="1"/>
        <end position="356"/>
    </location>
</feature>
<feature type="active site" description="Proton acceptor; specific for D-alanine" evidence="1">
    <location>
        <position position="35"/>
    </location>
</feature>
<feature type="active site" description="Proton acceptor; specific for L-alanine" evidence="1">
    <location>
        <position position="253"/>
    </location>
</feature>
<feature type="binding site" evidence="1">
    <location>
        <position position="130"/>
    </location>
    <ligand>
        <name>substrate</name>
    </ligand>
</feature>
<feature type="binding site" evidence="1">
    <location>
        <position position="301"/>
    </location>
    <ligand>
        <name>substrate</name>
    </ligand>
</feature>
<feature type="modified residue" description="N6-(pyridoxal phosphate)lysine" evidence="1">
    <location>
        <position position="35"/>
    </location>
</feature>
<evidence type="ECO:0000255" key="1">
    <source>
        <dbReference type="HAMAP-Rule" id="MF_01201"/>
    </source>
</evidence>
<proteinExistence type="inferred from homology"/>
<keyword id="KW-0413">Isomerase</keyword>
<keyword id="KW-0663">Pyridoxal phosphate</keyword>
<reference key="1">
    <citation type="journal article" date="2011" name="J. Bacteriol.">
        <title>Complete genome sequence of the plant growth-promoting endophyte Burkholderia phytofirmans strain PsJN.</title>
        <authorList>
            <person name="Weilharter A."/>
            <person name="Mitter B."/>
            <person name="Shin M.V."/>
            <person name="Chain P.S."/>
            <person name="Nowak J."/>
            <person name="Sessitsch A."/>
        </authorList>
    </citation>
    <scope>NUCLEOTIDE SEQUENCE [LARGE SCALE GENOMIC DNA]</scope>
    <source>
        <strain>DSM 17436 / LMG 22146 / PsJN</strain>
    </source>
</reference>
<comment type="function">
    <text evidence="1">Catalyzes the interconversion of L-alanine and D-alanine. May also act on other amino acids.</text>
</comment>
<comment type="catalytic activity">
    <reaction evidence="1">
        <text>L-alanine = D-alanine</text>
        <dbReference type="Rhea" id="RHEA:20249"/>
        <dbReference type="ChEBI" id="CHEBI:57416"/>
        <dbReference type="ChEBI" id="CHEBI:57972"/>
        <dbReference type="EC" id="5.1.1.1"/>
    </reaction>
</comment>
<comment type="cofactor">
    <cofactor evidence="1">
        <name>pyridoxal 5'-phosphate</name>
        <dbReference type="ChEBI" id="CHEBI:597326"/>
    </cofactor>
</comment>
<comment type="pathway">
    <text evidence="1">Amino-acid biosynthesis; D-alanine biosynthesis; D-alanine from L-alanine: step 1/1.</text>
</comment>
<comment type="similarity">
    <text evidence="1">Belongs to the alanine racemase family.</text>
</comment>
<organism>
    <name type="scientific">Paraburkholderia phytofirmans (strain DSM 17436 / LMG 22146 / PsJN)</name>
    <name type="common">Burkholderia phytofirmans</name>
    <dbReference type="NCBI Taxonomy" id="398527"/>
    <lineage>
        <taxon>Bacteria</taxon>
        <taxon>Pseudomonadati</taxon>
        <taxon>Pseudomonadota</taxon>
        <taxon>Betaproteobacteria</taxon>
        <taxon>Burkholderiales</taxon>
        <taxon>Burkholderiaceae</taxon>
        <taxon>Paraburkholderia</taxon>
    </lineage>
</organism>
<accession>B2T5L6</accession>
<dbReference type="EC" id="5.1.1.1" evidence="1"/>
<dbReference type="EMBL" id="CP001052">
    <property type="protein sequence ID" value="ACD16873.1"/>
    <property type="molecule type" value="Genomic_DNA"/>
</dbReference>
<dbReference type="RefSeq" id="WP_012433470.1">
    <property type="nucleotide sequence ID" value="NC_010681.1"/>
</dbReference>
<dbReference type="SMR" id="B2T5L6"/>
<dbReference type="STRING" id="398527.Bphyt_2477"/>
<dbReference type="KEGG" id="bpy:Bphyt_2477"/>
<dbReference type="eggNOG" id="COG0787">
    <property type="taxonomic scope" value="Bacteria"/>
</dbReference>
<dbReference type="HOGENOM" id="CLU_028393_1_0_4"/>
<dbReference type="OrthoDB" id="9813814at2"/>
<dbReference type="UniPathway" id="UPA00042">
    <property type="reaction ID" value="UER00497"/>
</dbReference>
<dbReference type="Proteomes" id="UP000001739">
    <property type="component" value="Chromosome 1"/>
</dbReference>
<dbReference type="GO" id="GO:0005829">
    <property type="term" value="C:cytosol"/>
    <property type="evidence" value="ECO:0007669"/>
    <property type="project" value="TreeGrafter"/>
</dbReference>
<dbReference type="GO" id="GO:0008784">
    <property type="term" value="F:alanine racemase activity"/>
    <property type="evidence" value="ECO:0007669"/>
    <property type="project" value="UniProtKB-UniRule"/>
</dbReference>
<dbReference type="GO" id="GO:0030170">
    <property type="term" value="F:pyridoxal phosphate binding"/>
    <property type="evidence" value="ECO:0007669"/>
    <property type="project" value="UniProtKB-UniRule"/>
</dbReference>
<dbReference type="GO" id="GO:0030632">
    <property type="term" value="P:D-alanine biosynthetic process"/>
    <property type="evidence" value="ECO:0007669"/>
    <property type="project" value="UniProtKB-UniRule"/>
</dbReference>
<dbReference type="CDD" id="cd06827">
    <property type="entry name" value="PLPDE_III_AR_proteobact"/>
    <property type="match status" value="1"/>
</dbReference>
<dbReference type="FunFam" id="2.40.37.10:FF:000002">
    <property type="entry name" value="Alanine racemase"/>
    <property type="match status" value="1"/>
</dbReference>
<dbReference type="FunFam" id="3.20.20.10:FF:000002">
    <property type="entry name" value="Alanine racemase"/>
    <property type="match status" value="1"/>
</dbReference>
<dbReference type="Gene3D" id="3.20.20.10">
    <property type="entry name" value="Alanine racemase"/>
    <property type="match status" value="1"/>
</dbReference>
<dbReference type="Gene3D" id="2.40.37.10">
    <property type="entry name" value="Lyase, Ornithine Decarboxylase, Chain A, domain 1"/>
    <property type="match status" value="1"/>
</dbReference>
<dbReference type="HAMAP" id="MF_01201">
    <property type="entry name" value="Ala_racemase"/>
    <property type="match status" value="1"/>
</dbReference>
<dbReference type="InterPro" id="IPR000821">
    <property type="entry name" value="Ala_racemase"/>
</dbReference>
<dbReference type="InterPro" id="IPR009006">
    <property type="entry name" value="Ala_racemase/Decarboxylase_C"/>
</dbReference>
<dbReference type="InterPro" id="IPR011079">
    <property type="entry name" value="Ala_racemase_C"/>
</dbReference>
<dbReference type="InterPro" id="IPR001608">
    <property type="entry name" value="Ala_racemase_N"/>
</dbReference>
<dbReference type="InterPro" id="IPR020622">
    <property type="entry name" value="Ala_racemase_pyridoxalP-BS"/>
</dbReference>
<dbReference type="InterPro" id="IPR029066">
    <property type="entry name" value="PLP-binding_barrel"/>
</dbReference>
<dbReference type="NCBIfam" id="TIGR00492">
    <property type="entry name" value="alr"/>
    <property type="match status" value="1"/>
</dbReference>
<dbReference type="PANTHER" id="PTHR30511">
    <property type="entry name" value="ALANINE RACEMASE"/>
    <property type="match status" value="1"/>
</dbReference>
<dbReference type="PANTHER" id="PTHR30511:SF0">
    <property type="entry name" value="ALANINE RACEMASE, CATABOLIC-RELATED"/>
    <property type="match status" value="1"/>
</dbReference>
<dbReference type="Pfam" id="PF00842">
    <property type="entry name" value="Ala_racemase_C"/>
    <property type="match status" value="1"/>
</dbReference>
<dbReference type="Pfam" id="PF01168">
    <property type="entry name" value="Ala_racemase_N"/>
    <property type="match status" value="1"/>
</dbReference>
<dbReference type="PRINTS" id="PR00992">
    <property type="entry name" value="ALARACEMASE"/>
</dbReference>
<dbReference type="SMART" id="SM01005">
    <property type="entry name" value="Ala_racemase_C"/>
    <property type="match status" value="1"/>
</dbReference>
<dbReference type="SUPFAM" id="SSF50621">
    <property type="entry name" value="Alanine racemase C-terminal domain-like"/>
    <property type="match status" value="1"/>
</dbReference>
<dbReference type="SUPFAM" id="SSF51419">
    <property type="entry name" value="PLP-binding barrel"/>
    <property type="match status" value="1"/>
</dbReference>
<dbReference type="PROSITE" id="PS00395">
    <property type="entry name" value="ALANINE_RACEMASE"/>
    <property type="match status" value="1"/>
</dbReference>
<protein>
    <recommendedName>
        <fullName evidence="1">Alanine racemase</fullName>
        <ecNumber evidence="1">5.1.1.1</ecNumber>
    </recommendedName>
</protein>
<name>ALR_PARPJ</name>